<feature type="chain" id="PRO_1000081460" description="Large ribosomal subunit protein bL31B">
    <location>
        <begin position="1"/>
        <end position="84"/>
    </location>
</feature>
<sequence length="84" mass="9723">MKQGIHPEYHQVIFLDTTTNFKFLSGSTKTSSEMMEWEDGKEYPVIRLDISSDSHPFYTGRQKFAAADGRVERFNKKFGLKSNN</sequence>
<name>RL31B_STAA2</name>
<accession>A6U3K5</accession>
<evidence type="ECO:0000255" key="1">
    <source>
        <dbReference type="HAMAP-Rule" id="MF_00502"/>
    </source>
</evidence>
<evidence type="ECO:0000305" key="2"/>
<protein>
    <recommendedName>
        <fullName evidence="1">Large ribosomal subunit protein bL31B</fullName>
    </recommendedName>
    <alternativeName>
        <fullName evidence="2">50S ribosomal protein L31 type B</fullName>
    </alternativeName>
</protein>
<organism>
    <name type="scientific">Staphylococcus aureus (strain JH1)</name>
    <dbReference type="NCBI Taxonomy" id="359787"/>
    <lineage>
        <taxon>Bacteria</taxon>
        <taxon>Bacillati</taxon>
        <taxon>Bacillota</taxon>
        <taxon>Bacilli</taxon>
        <taxon>Bacillales</taxon>
        <taxon>Staphylococcaceae</taxon>
        <taxon>Staphylococcus</taxon>
    </lineage>
</organism>
<comment type="subunit">
    <text evidence="1">Part of the 50S ribosomal subunit.</text>
</comment>
<comment type="similarity">
    <text evidence="1">Belongs to the bacterial ribosomal protein bL31 family. Type B subfamily.</text>
</comment>
<gene>
    <name evidence="1" type="primary">rpmE2</name>
    <name type="ordered locus">SaurJH1_2194</name>
</gene>
<proteinExistence type="inferred from homology"/>
<keyword id="KW-0687">Ribonucleoprotein</keyword>
<keyword id="KW-0689">Ribosomal protein</keyword>
<reference key="1">
    <citation type="submission" date="2007-06" db="EMBL/GenBank/DDBJ databases">
        <title>Complete sequence of chromosome of Staphylococcus aureus subsp. aureus JH1.</title>
        <authorList>
            <consortium name="US DOE Joint Genome Institute"/>
            <person name="Copeland A."/>
            <person name="Lucas S."/>
            <person name="Lapidus A."/>
            <person name="Barry K."/>
            <person name="Detter J.C."/>
            <person name="Glavina del Rio T."/>
            <person name="Hammon N."/>
            <person name="Israni S."/>
            <person name="Dalin E."/>
            <person name="Tice H."/>
            <person name="Pitluck S."/>
            <person name="Chain P."/>
            <person name="Malfatti S."/>
            <person name="Shin M."/>
            <person name="Vergez L."/>
            <person name="Schmutz J."/>
            <person name="Larimer F."/>
            <person name="Land M."/>
            <person name="Hauser L."/>
            <person name="Kyrpides N."/>
            <person name="Ivanova N."/>
            <person name="Tomasz A."/>
            <person name="Richardson P."/>
        </authorList>
    </citation>
    <scope>NUCLEOTIDE SEQUENCE [LARGE SCALE GENOMIC DNA]</scope>
    <source>
        <strain>JH1</strain>
    </source>
</reference>
<dbReference type="EMBL" id="CP000736">
    <property type="protein sequence ID" value="ABR53023.1"/>
    <property type="molecule type" value="Genomic_DNA"/>
</dbReference>
<dbReference type="SMR" id="A6U3K5"/>
<dbReference type="KEGG" id="sah:SaurJH1_2194"/>
<dbReference type="HOGENOM" id="CLU_114306_2_2_9"/>
<dbReference type="GO" id="GO:1990904">
    <property type="term" value="C:ribonucleoprotein complex"/>
    <property type="evidence" value="ECO:0007669"/>
    <property type="project" value="UniProtKB-KW"/>
</dbReference>
<dbReference type="GO" id="GO:0005840">
    <property type="term" value="C:ribosome"/>
    <property type="evidence" value="ECO:0007669"/>
    <property type="project" value="UniProtKB-KW"/>
</dbReference>
<dbReference type="GO" id="GO:0003735">
    <property type="term" value="F:structural constituent of ribosome"/>
    <property type="evidence" value="ECO:0007669"/>
    <property type="project" value="InterPro"/>
</dbReference>
<dbReference type="GO" id="GO:0006412">
    <property type="term" value="P:translation"/>
    <property type="evidence" value="ECO:0007669"/>
    <property type="project" value="UniProtKB-UniRule"/>
</dbReference>
<dbReference type="Gene3D" id="4.10.830.30">
    <property type="entry name" value="Ribosomal protein L31"/>
    <property type="match status" value="1"/>
</dbReference>
<dbReference type="HAMAP" id="MF_00502">
    <property type="entry name" value="Ribosomal_bL31_2"/>
    <property type="match status" value="1"/>
</dbReference>
<dbReference type="InterPro" id="IPR034704">
    <property type="entry name" value="Ribosomal_bL28/bL31-like_sf"/>
</dbReference>
<dbReference type="InterPro" id="IPR002150">
    <property type="entry name" value="Ribosomal_bL31"/>
</dbReference>
<dbReference type="InterPro" id="IPR027493">
    <property type="entry name" value="Ribosomal_bL31_B"/>
</dbReference>
<dbReference type="InterPro" id="IPR042105">
    <property type="entry name" value="Ribosomal_bL31_sf"/>
</dbReference>
<dbReference type="NCBIfam" id="TIGR00105">
    <property type="entry name" value="L31"/>
    <property type="match status" value="1"/>
</dbReference>
<dbReference type="NCBIfam" id="NF002462">
    <property type="entry name" value="PRK01678.1"/>
    <property type="match status" value="1"/>
</dbReference>
<dbReference type="PANTHER" id="PTHR33280">
    <property type="entry name" value="50S RIBOSOMAL PROTEIN L31, CHLOROPLASTIC"/>
    <property type="match status" value="1"/>
</dbReference>
<dbReference type="PANTHER" id="PTHR33280:SF1">
    <property type="entry name" value="LARGE RIBOSOMAL SUBUNIT PROTEIN BL31C"/>
    <property type="match status" value="1"/>
</dbReference>
<dbReference type="Pfam" id="PF01197">
    <property type="entry name" value="Ribosomal_L31"/>
    <property type="match status" value="1"/>
</dbReference>
<dbReference type="PRINTS" id="PR01249">
    <property type="entry name" value="RIBOSOMALL31"/>
</dbReference>
<dbReference type="SUPFAM" id="SSF143800">
    <property type="entry name" value="L28p-like"/>
    <property type="match status" value="1"/>
</dbReference>
<dbReference type="PROSITE" id="PS01143">
    <property type="entry name" value="RIBOSOMAL_L31"/>
    <property type="match status" value="1"/>
</dbReference>